<organism>
    <name type="scientific">Leptospira interrogans serogroup Icterohaemorrhagiae serovar Lai (strain 56601)</name>
    <dbReference type="NCBI Taxonomy" id="189518"/>
    <lineage>
        <taxon>Bacteria</taxon>
        <taxon>Pseudomonadati</taxon>
        <taxon>Spirochaetota</taxon>
        <taxon>Spirochaetia</taxon>
        <taxon>Leptospirales</taxon>
        <taxon>Leptospiraceae</taxon>
        <taxon>Leptospira</taxon>
    </lineage>
</organism>
<reference key="1">
    <citation type="journal article" date="2003" name="Nature">
        <title>Unique physiological and pathogenic features of Leptospira interrogans revealed by whole-genome sequencing.</title>
        <authorList>
            <person name="Ren S.-X."/>
            <person name="Fu G."/>
            <person name="Jiang X.-G."/>
            <person name="Zeng R."/>
            <person name="Miao Y.-G."/>
            <person name="Xu H."/>
            <person name="Zhang Y.-X."/>
            <person name="Xiong H."/>
            <person name="Lu G."/>
            <person name="Lu L.-F."/>
            <person name="Jiang H.-Q."/>
            <person name="Jia J."/>
            <person name="Tu Y.-F."/>
            <person name="Jiang J.-X."/>
            <person name="Gu W.-Y."/>
            <person name="Zhang Y.-Q."/>
            <person name="Cai Z."/>
            <person name="Sheng H.-H."/>
            <person name="Yin H.-F."/>
            <person name="Zhang Y."/>
            <person name="Zhu G.-F."/>
            <person name="Wan M."/>
            <person name="Huang H.-L."/>
            <person name="Qian Z."/>
            <person name="Wang S.-Y."/>
            <person name="Ma W."/>
            <person name="Yao Z.-J."/>
            <person name="Shen Y."/>
            <person name="Qiang B.-Q."/>
            <person name="Xia Q.-C."/>
            <person name="Guo X.-K."/>
            <person name="Danchin A."/>
            <person name="Saint Girons I."/>
            <person name="Somerville R.L."/>
            <person name="Wen Y.-M."/>
            <person name="Shi M.-H."/>
            <person name="Chen Z."/>
            <person name="Xu J.-G."/>
            <person name="Zhao G.-P."/>
        </authorList>
    </citation>
    <scope>NUCLEOTIDE SEQUENCE [LARGE SCALE GENOMIC DNA]</scope>
    <source>
        <strain>56601</strain>
    </source>
</reference>
<evidence type="ECO:0000255" key="1">
    <source>
        <dbReference type="HAMAP-Rule" id="MF_00040"/>
    </source>
</evidence>
<sequence length="184" mass="20601">MASDAIISGMKTKMDKTIDLVKKDFGTIRTGRANPSLVEDIRVDYYGNQTPINQLGNISVPEPRMLVISPYDKGIMKDIEKAIQTSGLGLQPTNDGVVIRIVIPELTGERRKELAKVVKSKSEEKKVAIRNIRRDAMEDLKKHTEGMSQDEIKSVQDQIQKITDSYIDKISALTAEKEKEITTI</sequence>
<accession>Q8F143</accession>
<keyword id="KW-0963">Cytoplasm</keyword>
<keyword id="KW-0648">Protein biosynthesis</keyword>
<keyword id="KW-1185">Reference proteome</keyword>
<proteinExistence type="inferred from homology"/>
<comment type="function">
    <text evidence="1">Responsible for the release of ribosomes from messenger RNA at the termination of protein biosynthesis. May increase the efficiency of translation by recycling ribosomes from one round of translation to another.</text>
</comment>
<comment type="subcellular location">
    <subcellularLocation>
        <location evidence="1">Cytoplasm</location>
    </subcellularLocation>
</comment>
<comment type="similarity">
    <text evidence="1">Belongs to the RRF family.</text>
</comment>
<dbReference type="EMBL" id="AE010300">
    <property type="protein sequence ID" value="AAN50493.1"/>
    <property type="molecule type" value="Genomic_DNA"/>
</dbReference>
<dbReference type="RefSeq" id="NP_713475.1">
    <property type="nucleotide sequence ID" value="NC_004342.2"/>
</dbReference>
<dbReference type="RefSeq" id="WP_000135448.1">
    <property type="nucleotide sequence ID" value="NC_004342.2"/>
</dbReference>
<dbReference type="SMR" id="Q8F143"/>
<dbReference type="FunCoup" id="Q8F143">
    <property type="interactions" value="520"/>
</dbReference>
<dbReference type="STRING" id="189518.LA_3295"/>
<dbReference type="PaxDb" id="189518-LA_3295"/>
<dbReference type="EnsemblBacteria" id="AAN50493">
    <property type="protein sequence ID" value="AAN50493"/>
    <property type="gene ID" value="LA_3295"/>
</dbReference>
<dbReference type="GeneID" id="61144185"/>
<dbReference type="KEGG" id="lil:LA_3295"/>
<dbReference type="PATRIC" id="fig|189518.3.peg.3265"/>
<dbReference type="HOGENOM" id="CLU_073981_2_0_12"/>
<dbReference type="InParanoid" id="Q8F143"/>
<dbReference type="OrthoDB" id="9804006at2"/>
<dbReference type="Proteomes" id="UP000001408">
    <property type="component" value="Chromosome I"/>
</dbReference>
<dbReference type="GO" id="GO:0005737">
    <property type="term" value="C:cytoplasm"/>
    <property type="evidence" value="ECO:0007669"/>
    <property type="project" value="UniProtKB-SubCell"/>
</dbReference>
<dbReference type="GO" id="GO:0043023">
    <property type="term" value="F:ribosomal large subunit binding"/>
    <property type="evidence" value="ECO:0000318"/>
    <property type="project" value="GO_Central"/>
</dbReference>
<dbReference type="GO" id="GO:0006412">
    <property type="term" value="P:translation"/>
    <property type="evidence" value="ECO:0000318"/>
    <property type="project" value="GO_Central"/>
</dbReference>
<dbReference type="GO" id="GO:0006415">
    <property type="term" value="P:translational termination"/>
    <property type="evidence" value="ECO:0007669"/>
    <property type="project" value="UniProtKB-UniRule"/>
</dbReference>
<dbReference type="CDD" id="cd00520">
    <property type="entry name" value="RRF"/>
    <property type="match status" value="1"/>
</dbReference>
<dbReference type="FunFam" id="1.10.132.20:FF:000001">
    <property type="entry name" value="Ribosome-recycling factor"/>
    <property type="match status" value="1"/>
</dbReference>
<dbReference type="FunFam" id="3.30.1360.40:FF:000001">
    <property type="entry name" value="Ribosome-recycling factor"/>
    <property type="match status" value="1"/>
</dbReference>
<dbReference type="Gene3D" id="3.30.1360.40">
    <property type="match status" value="1"/>
</dbReference>
<dbReference type="Gene3D" id="1.10.132.20">
    <property type="entry name" value="Ribosome-recycling factor"/>
    <property type="match status" value="1"/>
</dbReference>
<dbReference type="HAMAP" id="MF_00040">
    <property type="entry name" value="RRF"/>
    <property type="match status" value="1"/>
</dbReference>
<dbReference type="InterPro" id="IPR002661">
    <property type="entry name" value="Ribosome_recyc_fac"/>
</dbReference>
<dbReference type="InterPro" id="IPR023584">
    <property type="entry name" value="Ribosome_recyc_fac_dom"/>
</dbReference>
<dbReference type="InterPro" id="IPR036191">
    <property type="entry name" value="RRF_sf"/>
</dbReference>
<dbReference type="NCBIfam" id="TIGR00496">
    <property type="entry name" value="frr"/>
    <property type="match status" value="1"/>
</dbReference>
<dbReference type="PANTHER" id="PTHR20982:SF3">
    <property type="entry name" value="MITOCHONDRIAL RIBOSOME RECYCLING FACTOR PSEUDO 1"/>
    <property type="match status" value="1"/>
</dbReference>
<dbReference type="PANTHER" id="PTHR20982">
    <property type="entry name" value="RIBOSOME RECYCLING FACTOR"/>
    <property type="match status" value="1"/>
</dbReference>
<dbReference type="Pfam" id="PF01765">
    <property type="entry name" value="RRF"/>
    <property type="match status" value="1"/>
</dbReference>
<dbReference type="SUPFAM" id="SSF55194">
    <property type="entry name" value="Ribosome recycling factor, RRF"/>
    <property type="match status" value="1"/>
</dbReference>
<protein>
    <recommendedName>
        <fullName evidence="1">Ribosome-recycling factor</fullName>
        <shortName evidence="1">RRF</shortName>
    </recommendedName>
    <alternativeName>
        <fullName evidence="1">Ribosome-releasing factor</fullName>
    </alternativeName>
</protein>
<name>RRF_LEPIN</name>
<gene>
    <name evidence="1" type="primary">frr</name>
    <name type="ordered locus">LA_3295</name>
</gene>
<feature type="chain" id="PRO_0000167483" description="Ribosome-recycling factor">
    <location>
        <begin position="1"/>
        <end position="184"/>
    </location>
</feature>